<evidence type="ECO:0000250" key="1"/>
<evidence type="ECO:0000250" key="2">
    <source>
        <dbReference type="UniProtKB" id="D0E0C2"/>
    </source>
</evidence>
<evidence type="ECO:0000250" key="3">
    <source>
        <dbReference type="UniProtKB" id="P15389"/>
    </source>
</evidence>
<evidence type="ECO:0000250" key="4">
    <source>
        <dbReference type="UniProtKB" id="Q14524"/>
    </source>
</evidence>
<evidence type="ECO:0000250" key="5">
    <source>
        <dbReference type="UniProtKB" id="Q9Y5Y9"/>
    </source>
</evidence>
<evidence type="ECO:0000255" key="6"/>
<evidence type="ECO:0000256" key="7">
    <source>
        <dbReference type="SAM" id="MobiDB-lite"/>
    </source>
</evidence>
<evidence type="ECO:0000269" key="8">
    <source>
    </source>
</evidence>
<evidence type="ECO:0000305" key="9"/>
<organism>
    <name type="scientific">Canis lupus familiaris</name>
    <name type="common">Dog</name>
    <name type="synonym">Canis familiaris</name>
    <dbReference type="NCBI Taxonomy" id="9615"/>
    <lineage>
        <taxon>Eukaryota</taxon>
        <taxon>Metazoa</taxon>
        <taxon>Chordata</taxon>
        <taxon>Craniata</taxon>
        <taxon>Vertebrata</taxon>
        <taxon>Euteleostomi</taxon>
        <taxon>Mammalia</taxon>
        <taxon>Eutheria</taxon>
        <taxon>Laurasiatheria</taxon>
        <taxon>Carnivora</taxon>
        <taxon>Caniformia</taxon>
        <taxon>Canidae</taxon>
        <taxon>Canis</taxon>
    </lineage>
</organism>
<gene>
    <name type="primary">SCN10A</name>
</gene>
<feature type="chain" id="PRO_0000048506" description="Sodium channel protein type 10 subunit alpha">
    <location>
        <begin position="1"/>
        <end position="1962"/>
    </location>
</feature>
<feature type="topological domain" description="Cytoplasmic" evidence="9">
    <location>
        <begin position="1"/>
        <end position="125"/>
    </location>
</feature>
<feature type="transmembrane region" description="Helical; Name=S1 of repeat I" evidence="6">
    <location>
        <begin position="126"/>
        <end position="149"/>
    </location>
</feature>
<feature type="topological domain" description="Extracellular" evidence="9">
    <location>
        <begin position="150"/>
        <end position="154"/>
    </location>
</feature>
<feature type="transmembrane region" description="Helical; Name=S2 of repeat I" evidence="6">
    <location>
        <begin position="155"/>
        <end position="174"/>
    </location>
</feature>
<feature type="topological domain" description="Cytoplasmic" evidence="9">
    <location>
        <begin position="175"/>
        <end position="187"/>
    </location>
</feature>
<feature type="transmembrane region" description="Helical; Name=S3 of repeat I" evidence="6">
    <location>
        <begin position="188"/>
        <end position="206"/>
    </location>
</feature>
<feature type="topological domain" description="Extracellular" evidence="9">
    <location>
        <begin position="207"/>
        <end position="212"/>
    </location>
</feature>
<feature type="transmembrane region" description="Helical; Voltage-sensor; Name=S4 of repeat I" evidence="6">
    <location>
        <begin position="213"/>
        <end position="232"/>
    </location>
</feature>
<feature type="topological domain" description="Cytoplasmic" evidence="9">
    <location>
        <begin position="233"/>
        <end position="248"/>
    </location>
</feature>
<feature type="transmembrane region" description="Helical; Name=S5 of repeat I" evidence="6">
    <location>
        <begin position="249"/>
        <end position="272"/>
    </location>
</feature>
<feature type="topological domain" description="Extracellular" evidence="9">
    <location>
        <begin position="273"/>
        <end position="350"/>
    </location>
</feature>
<feature type="intramembrane region" description="Pore-forming" evidence="2">
    <location>
        <begin position="351"/>
        <end position="375"/>
    </location>
</feature>
<feature type="topological domain" description="Extracellular" evidence="9">
    <location>
        <begin position="376"/>
        <end position="382"/>
    </location>
</feature>
<feature type="transmembrane region" description="Helical; Name=S6 of repeat I" evidence="6">
    <location>
        <begin position="383"/>
        <end position="408"/>
    </location>
</feature>
<feature type="topological domain" description="Cytoplasmic" evidence="9">
    <location>
        <begin position="409"/>
        <end position="668"/>
    </location>
</feature>
<feature type="transmembrane region" description="Helical; Name=S1 of repeat II" evidence="6">
    <location>
        <begin position="669"/>
        <end position="693"/>
    </location>
</feature>
<feature type="topological domain" description="Extracellular" evidence="9">
    <location>
        <begin position="694"/>
        <end position="704"/>
    </location>
</feature>
<feature type="transmembrane region" description="Helical; Name=S2 of repeat II" evidence="6">
    <location>
        <begin position="705"/>
        <end position="728"/>
    </location>
</feature>
<feature type="topological domain" description="Cytoplasmic" evidence="9">
    <location>
        <begin position="729"/>
        <end position="736"/>
    </location>
</feature>
<feature type="transmembrane region" description="Helical; Name=S3 of repeat II" evidence="6">
    <location>
        <begin position="737"/>
        <end position="756"/>
    </location>
</feature>
<feature type="topological domain" description="Extracellular" evidence="9">
    <location>
        <begin position="757"/>
        <end position="762"/>
    </location>
</feature>
<feature type="transmembrane region" description="Helical; Voltage-sensor; Name=S4 of repeat II" evidence="6">
    <location>
        <begin position="763"/>
        <end position="782"/>
    </location>
</feature>
<feature type="topological domain" description="Cytoplasmic" evidence="9">
    <location>
        <begin position="783"/>
        <end position="798"/>
    </location>
</feature>
<feature type="transmembrane region" description="Helical; Name=S5 of repeat II" evidence="6">
    <location>
        <begin position="799"/>
        <end position="819"/>
    </location>
</feature>
<feature type="topological domain" description="Extracellular" evidence="9">
    <location>
        <begin position="820"/>
        <end position="843"/>
    </location>
</feature>
<feature type="intramembrane region" description="Pore-forming" evidence="2">
    <location>
        <begin position="844"/>
        <end position="864"/>
    </location>
</feature>
<feature type="topological domain" description="Extracellular" evidence="9">
    <location>
        <begin position="865"/>
        <end position="873"/>
    </location>
</feature>
<feature type="transmembrane region" description="Helical; Name=S6 of repeat II" evidence="6">
    <location>
        <begin position="874"/>
        <end position="899"/>
    </location>
</feature>
<feature type="topological domain" description="Cytoplasmic" evidence="9">
    <location>
        <begin position="900"/>
        <end position="1154"/>
    </location>
</feature>
<feature type="transmembrane region" description="Helical; Name=S1 of repeat III" evidence="6">
    <location>
        <begin position="1155"/>
        <end position="1178"/>
    </location>
</feature>
<feature type="topological domain" description="Extracellular" evidence="9">
    <location>
        <begin position="1179"/>
        <end position="1191"/>
    </location>
</feature>
<feature type="transmembrane region" description="Helical; Name=S2 of repeat III" evidence="6">
    <location>
        <begin position="1192"/>
        <end position="1217"/>
    </location>
</feature>
<feature type="topological domain" description="Cytoplasmic" evidence="9">
    <location>
        <begin position="1218"/>
        <end position="1223"/>
    </location>
</feature>
<feature type="transmembrane region" description="Helical; Name=S3 of repeat III" evidence="6">
    <location>
        <begin position="1224"/>
        <end position="1245"/>
    </location>
</feature>
<feature type="topological domain" description="Extracellular" evidence="9">
    <location>
        <begin position="1246"/>
        <end position="1249"/>
    </location>
</feature>
<feature type="transmembrane region" description="Helical; Voltage-sensor; Name=S4 of repeat III" evidence="6">
    <location>
        <begin position="1250"/>
        <end position="1271"/>
    </location>
</feature>
<feature type="topological domain" description="Cytoplasmic" evidence="9">
    <location>
        <begin position="1272"/>
        <end position="1290"/>
    </location>
</feature>
<feature type="transmembrane region" description="Helical; Name=S5 of repeat III" evidence="6">
    <location>
        <begin position="1291"/>
        <end position="1318"/>
    </location>
</feature>
<feature type="topological domain" description="Extracellular" evidence="9">
    <location>
        <begin position="1319"/>
        <end position="1360"/>
    </location>
</feature>
<feature type="intramembrane region" description="Pore-forming" evidence="2">
    <location>
        <begin position="1361"/>
        <end position="1382"/>
    </location>
</feature>
<feature type="topological domain" description="Extracellular" evidence="9">
    <location>
        <begin position="1383"/>
        <end position="1398"/>
    </location>
</feature>
<feature type="transmembrane region" description="Helical; Name=S6 of repeat III" evidence="6">
    <location>
        <begin position="1399"/>
        <end position="1425"/>
    </location>
</feature>
<feature type="topological domain" description="Cytoplasmic" evidence="9">
    <location>
        <begin position="1426"/>
        <end position="1478"/>
    </location>
</feature>
<feature type="transmembrane region" description="Helical; Name=S1 of repeat IV" evidence="6">
    <location>
        <begin position="1479"/>
        <end position="1502"/>
    </location>
</feature>
<feature type="topological domain" description="Extracellular" evidence="9">
    <location>
        <begin position="1503"/>
        <end position="1513"/>
    </location>
</feature>
<feature type="transmembrane region" description="Helical; Name=S2 of repeat IV" evidence="6">
    <location>
        <begin position="1514"/>
        <end position="1537"/>
    </location>
</feature>
<feature type="topological domain" description="Cytoplasmic" evidence="9">
    <location>
        <begin position="1538"/>
        <end position="1543"/>
    </location>
</feature>
<feature type="transmembrane region" description="Helical; Name=S3 of repeat IV" evidence="6">
    <location>
        <begin position="1544"/>
        <end position="1567"/>
    </location>
</feature>
<feature type="topological domain" description="Extracellular" evidence="9">
    <location>
        <begin position="1568"/>
        <end position="1579"/>
    </location>
</feature>
<feature type="transmembrane region" description="Helical; Voltage-sensor; Name=S4 of repeat IV" evidence="6">
    <location>
        <begin position="1580"/>
        <end position="1601"/>
    </location>
</feature>
<feature type="topological domain" description="Cytoplasmic" evidence="9">
    <location>
        <begin position="1602"/>
        <end position="1616"/>
    </location>
</feature>
<feature type="transmembrane region" description="Helical; Name=S5 of repeat IV" evidence="6">
    <location>
        <begin position="1617"/>
        <end position="1639"/>
    </location>
</feature>
<feature type="topological domain" description="Extracellular" evidence="9">
    <location>
        <begin position="1640"/>
        <end position="1653"/>
    </location>
</feature>
<feature type="intramembrane region" description="Pore-forming" evidence="2">
    <location>
        <begin position="1654"/>
        <end position="1676"/>
    </location>
</feature>
<feature type="topological domain" description="Extracellular" evidence="9">
    <location>
        <begin position="1677"/>
        <end position="1704"/>
    </location>
</feature>
<feature type="transmembrane region" description="Helical; Name=S6 of repeat IV" evidence="6">
    <location>
        <begin position="1705"/>
        <end position="1729"/>
    </location>
</feature>
<feature type="topological domain" description="Cytoplasmic" evidence="9">
    <location>
        <begin position="1730"/>
        <end position="1962"/>
    </location>
</feature>
<feature type="repeat" description="I" evidence="9">
    <location>
        <begin position="116"/>
        <end position="414"/>
    </location>
</feature>
<feature type="repeat" description="II" evidence="9">
    <location>
        <begin position="656"/>
        <end position="920"/>
    </location>
</feature>
<feature type="repeat" description="III" evidence="9">
    <location>
        <begin position="1147"/>
        <end position="1456"/>
    </location>
</feature>
<feature type="repeat" description="IV" evidence="9">
    <location>
        <begin position="1465"/>
        <end position="1764"/>
    </location>
</feature>
<feature type="domain" description="IQ">
    <location>
        <begin position="1858"/>
        <end position="1887"/>
    </location>
</feature>
<feature type="region of interest" description="Disordered" evidence="7">
    <location>
        <begin position="32"/>
        <end position="56"/>
    </location>
</feature>
<feature type="region of interest" description="Disordered" evidence="7">
    <location>
        <begin position="452"/>
        <end position="493"/>
    </location>
</feature>
<feature type="region of interest" description="Disordered" evidence="7">
    <location>
        <begin position="521"/>
        <end position="586"/>
    </location>
</feature>
<feature type="region of interest" description="Disordered" evidence="7">
    <location>
        <begin position="1015"/>
        <end position="1035"/>
    </location>
</feature>
<feature type="region of interest" description="Disordered" evidence="7">
    <location>
        <begin position="1914"/>
        <end position="1962"/>
    </location>
</feature>
<feature type="compositionally biased region" description="Basic residues" evidence="7">
    <location>
        <begin position="33"/>
        <end position="42"/>
    </location>
</feature>
<feature type="compositionally biased region" description="Basic and acidic residues" evidence="7">
    <location>
        <begin position="43"/>
        <end position="55"/>
    </location>
</feature>
<feature type="compositionally biased region" description="Polar residues" evidence="7">
    <location>
        <begin position="452"/>
        <end position="463"/>
    </location>
</feature>
<feature type="compositionally biased region" description="Acidic residues" evidence="7">
    <location>
        <begin position="1015"/>
        <end position="1026"/>
    </location>
</feature>
<feature type="compositionally biased region" description="Polar residues" evidence="7">
    <location>
        <begin position="1928"/>
        <end position="1947"/>
    </location>
</feature>
<feature type="modified residue" description="Phosphoserine" evidence="4">
    <location>
        <position position="450"/>
    </location>
</feature>
<feature type="modified residue" description="Phosphoserine" evidence="4">
    <location>
        <position position="453"/>
    </location>
</feature>
<feature type="modified residue" description="Phosphoserine" evidence="4">
    <location>
        <position position="476"/>
    </location>
</feature>
<feature type="modified residue" description="Phosphoserine" evidence="4">
    <location>
        <position position="488"/>
    </location>
</feature>
<feature type="modified residue" description="Phosphoserine" evidence="4">
    <location>
        <position position="621"/>
    </location>
</feature>
<feature type="modified residue" description="Phosphoserine" evidence="4">
    <location>
        <position position="624"/>
    </location>
</feature>
<feature type="modified residue" description="Phosphoserine; by PKC" evidence="4">
    <location>
        <position position="1458"/>
    </location>
</feature>
<feature type="glycosylation site" description="N-linked (GlcNAc...) asparagine" evidence="6">
    <location>
        <position position="284"/>
    </location>
</feature>
<feature type="glycosylation site" description="N-linked (GlcNAc...) asparagine" evidence="6">
    <location>
        <position position="288"/>
    </location>
</feature>
<feature type="glycosylation site" description="N-linked (GlcNAc...) asparagine" evidence="6">
    <location>
        <position position="321"/>
    </location>
</feature>
<feature type="glycosylation site" description="N-linked (GlcNAc...) asparagine" evidence="6">
    <location>
        <position position="344"/>
    </location>
</feature>
<feature type="glycosylation site" description="N-linked (GlcNAc...) asparagine" evidence="6">
    <location>
        <position position="828"/>
    </location>
</feature>
<feature type="glycosylation site" description="N-linked (GlcNAc...) asparagine" evidence="6">
    <location>
        <position position="1319"/>
    </location>
</feature>
<feature type="glycosylation site" description="N-linked (GlcNAc...) asparagine" evidence="6">
    <location>
        <position position="1335"/>
    </location>
</feature>
<feature type="glycosylation site" description="N-linked (GlcNAc...) asparagine" evidence="6">
    <location>
        <position position="1343"/>
    </location>
</feature>
<feature type="glycosylation site" description="N-linked (GlcNAc...) asparagine" evidence="6">
    <location>
        <position position="1693"/>
    </location>
</feature>
<feature type="disulfide bond" evidence="2">
    <location>
        <begin position="276"/>
        <end position="328"/>
    </location>
</feature>
<feature type="disulfide bond" evidence="2">
    <location>
        <begin position="866"/>
        <end position="875"/>
    </location>
</feature>
<accession>O46669</accession>
<name>SCNAA_CANLF</name>
<reference key="1">
    <citation type="journal article" date="1997" name="Gene">
        <title>Molecular cloning of a putative tetrodotoxin-resistant sodium channel from dog nodose ganglion neurons.</title>
        <authorList>
            <person name="Chen J."/>
            <person name="Ikeda S.R."/>
            <person name="Lang W."/>
            <person name="Isales C.M."/>
            <person name="Wei X."/>
        </authorList>
    </citation>
    <scope>NUCLEOTIDE SEQUENCE [MRNA]</scope>
    <scope>TISSUE SPECIFICITY</scope>
    <source>
        <strain>Mongrel</strain>
        <tissue>Nodose ganglion</tissue>
    </source>
</reference>
<sequence>MEFPFGSLETTNFRRFTPESLVEIEKRIAAKQAAKKAKGKHREQKDQEEKPRPQLDLKACNQPPKFYGELPAELVGEPLEDLDPFYSTHRTFMVLDKGRTISRFSATRALWLFSPFNLIRRTAIKVSVHSWFSLFITVTILVNCVGMTQTELPDRIEYVFTVIYTFEALIKILARGFCLNEFAYLRDPWDWLDFSVITLAYIGEATALRGISGLRTFRVLRALKTVSVIPGLKVIVGALIHSVRKLADVTILTVFCLSVFALVGLQLFKGNLKNKCVKNCAALNETGNYSSYGKQEWNFCHRDEDFYYNKPGTSDPLLCGNGSDAGHCPKGYLCLKTSDNPDFNYTSFDSFAWAFLSLFRLMTQDSWERLYQQTLRASGKMYMVFFVLVIFLGSFYLVNLILAVVTMAYEEQNQATIDEIEAKEKTFQETLEMPRKEQEVLAALGIDTASLHSCNGSPLPSKNASERMRRMKPRVSEGSTDDNKSPQSDPYNQRRMSFLGLTSGRRRASHGSVFHFRTPCLDTSFPDGVTDDGVFPGDRESHRGSLLLGGGTSQQGPLLRSPLPQPPNPGSGHGEDGHSTLPTGELAPGGIEVSAFDAGQKKTFLSAEYLNEPFRAQRAMSVVSIMTSVLEELEESERRCPPCLTSFAQKYLIWECCPTWVKLKTVLFGIVTDPFAELTTTLCIVVNTVFMAMEHHGMSSAFEAMLQIGNIVFTVFFTAEMVFKIIAFDPYYYFQKRWNIFDCIIVTVSLIELGAARKGSLSVLRTFRLLRVFKLAKSWPTLNTLIKIIGNSVGALGNLTIILAIIVFVFALVGKQLLGENYRDNRRNISAPNEEWPRWHMHDFFHSFLIVFRILCGEWIENMWACMEVGQKSICLILFLTVMVLGNLVVLNLFTALLLNSFSADNLATPDEDGEVNNLQVALARIQAFGHRTKKAICNFFTRPCLLPWPKAEPQLVVKLPLSSSKAENHIAANAAVGSPGGLSVSRGLRDDHSDFITNPNIWVSVPIAEGESDLDDLEEDGEEDSQSSQQEVILQGQEQLQVETCEGHTAPRSPGSGMSSEDLASYVDEKWKDEAVAQAPAEGGDDSSSSGGSTVDCLDPEEILRKIPELADDLEEPDDCFTEGCLRRCPCCKVDISKFPWTVGWQVRKTCYRIVEHSWFESFIIFMILLSSGSLAFEDYHLDQKPTVKALLEYTDRMFTFIFVLEMLLKWVAYGFKKYFTNAWCWLDFLIVNISLISLIAKILQYSDVASIKALRTLRALRPLRALSRFEGMRVVVDALVGAIPSIMNVLLVCLIFWLIFSTMGVNFFAGKFGRCINKTNEYFSLVPLSIVNNISDCKYQNHTGSFFWVNVKVNFDNVAMGYLALLQVATFKGWMDIMYAAVDARDVNLQPKWEDNVYMYLYFVIFIIFGGFFTLNLFVGVIIDNFNQQKKKLGGQDIFMTEEQKKYYNAMKKLGSKKPQKPIPRPLNKYQGFVFDIVTKQAFDIVIMVLICLNMITMMVETDEQSAEKTKILNKINQFFVAVFTGECVMKMFALRHYYFTNGWNVFDFIVVVLSIGSLVFSVILTSLENYFSPTLFRVIRLARIGRILRLIRAAKGIRTLLFALMMSLPALFNIGLLLFLVMFIYSIFGMASFPHVSWEAGIDDMFNFQTFANSMLCLFQITTSAGWDGLLSPILNTGPPYCDPNLPNSNGSRGNCGSPAVGILFFTTYIIISFLIVVNMYIAVILENFNVATQESSEPLSEDDFDMFYETWEKFDPEATQFITFSALSDFADTLSGPLRIPKPNQNILIQMDLPLVPGDKIHCLDILFAFTKNVLGESGELDSLKANIEEKFMATNVSKASYEPIATTLRWKQEDISATVIQKAYRSYVLHRSMTISNPPAVPRAEEAVPPPDEAFVEFMVNENCALPDKSETASAASFPPSYDSVTRGLSDQINMSTSSSMQNEDEGTSKKVTAPGP</sequence>
<comment type="function">
    <text evidence="5">Tetrodotoxin-resistant channel that mediates the voltage-dependent sodium ion permeability of excitable membranes. Assuming opened or closed conformations in response to the voltage difference across the membrane, the protein forms a sodium-selective channel through which sodium ions may pass in accordance with their electrochemical gradient. Plays a role in neuropathic pain mechanisms.</text>
</comment>
<comment type="catalytic activity">
    <reaction evidence="5">
        <text>Na(+)(in) = Na(+)(out)</text>
        <dbReference type="Rhea" id="RHEA:34963"/>
        <dbReference type="ChEBI" id="CHEBI:29101"/>
    </reaction>
</comment>
<comment type="subunit">
    <text evidence="1">The channel consists of an ion conducting pore forming alpha-subunit regulated by one or more associated auxiliary subunits SCN1B, SCN2B and SCN3B; electrophysiological properties may vary depending on the type of the associated beta subunits. Found in a number of complexes with PRX, DYNLT1 and PDZD2. Interacts with proteins such as FSTL1, PRX, DYNLT1, PDZD2, S100A10 and many others (By similarity). Interacts with NEDD4 and NEDD4L.</text>
</comment>
<comment type="subcellular location">
    <subcellularLocation>
        <location evidence="2">Cell membrane</location>
        <topology evidence="2">Multi-pass membrane protein</topology>
    </subcellularLocation>
    <text evidence="1">It can be translocated to the cell membrane through association with S100A10.</text>
</comment>
<comment type="tissue specificity">
    <text evidence="8">Expressed in nodose ganglia, but not in cortex, hippocampus, cerebellum, liver, heart and skeletal muscle.</text>
</comment>
<comment type="domain">
    <text evidence="9">The sequence contains 4 internal repeats, each with 5 hydrophobic segments (S1, S2, S3, S5, S6) and one positively charged segment (S4). Segments S4 are probably the voltage-sensors and are characterized by a series of positively charged amino acids at every third position.</text>
</comment>
<comment type="PTM">
    <text evidence="1">Ubiquitinated by NEDD4L; which promotes its endocytosis.</text>
</comment>
<comment type="PTM">
    <text evidence="1">Phosphorylation at Ser-1458 by PKC in a highly conserved cytoplasmic loop slows inactivation of the sodium channel and reduces peak sodium currents.</text>
</comment>
<comment type="PTM">
    <text evidence="3">Lacks the cysteine which covalently binds the conotoxin GVIIJ. This cysteine (position 825) is speculated in other sodium channel subunits alpha to be implied in covalent binding with the sodium channel subunit beta-2 or beta-4.</text>
</comment>
<comment type="similarity">
    <text evidence="9">Belongs to the sodium channel (TC 1.A.1.10) family. Nav1.8/SCN10A subfamily.</text>
</comment>
<protein>
    <recommendedName>
        <fullName>Sodium channel protein type 10 subunit alpha</fullName>
    </recommendedName>
    <alternativeName>
        <fullName>NaNG</fullName>
    </alternativeName>
    <alternativeName>
        <fullName>Sodium channel protein type X subunit alpha</fullName>
    </alternativeName>
    <alternativeName>
        <fullName>Voltage-gated sodium channel subunit alpha Nav1.8</fullName>
    </alternativeName>
</protein>
<dbReference type="EMBL" id="U60590">
    <property type="protein sequence ID" value="AAC39164.1"/>
    <property type="molecule type" value="mRNA"/>
</dbReference>
<dbReference type="RefSeq" id="NP_001003203.1">
    <property type="nucleotide sequence ID" value="NM_001003203.1"/>
</dbReference>
<dbReference type="BMRB" id="O46669"/>
<dbReference type="SMR" id="O46669"/>
<dbReference type="FunCoup" id="O46669">
    <property type="interactions" value="26"/>
</dbReference>
<dbReference type="STRING" id="9615.ENSCAFP00000011447"/>
<dbReference type="GlyCosmos" id="O46669">
    <property type="glycosylation" value="9 sites, No reported glycans"/>
</dbReference>
<dbReference type="PaxDb" id="9612-ENSCAFP00000011447"/>
<dbReference type="GeneID" id="477026"/>
<dbReference type="KEGG" id="cfa:477026"/>
<dbReference type="CTD" id="6336"/>
<dbReference type="eggNOG" id="KOG2301">
    <property type="taxonomic scope" value="Eukaryota"/>
</dbReference>
<dbReference type="InParanoid" id="O46669"/>
<dbReference type="OrthoDB" id="2984333at2759"/>
<dbReference type="Proteomes" id="UP000002254">
    <property type="component" value="Unplaced"/>
</dbReference>
<dbReference type="Proteomes" id="UP000694429">
    <property type="component" value="Unplaced"/>
</dbReference>
<dbReference type="Proteomes" id="UP000694542">
    <property type="component" value="Unplaced"/>
</dbReference>
<dbReference type="Proteomes" id="UP000805418">
    <property type="component" value="Unplaced"/>
</dbReference>
<dbReference type="GO" id="GO:0030424">
    <property type="term" value="C:axon"/>
    <property type="evidence" value="ECO:0000318"/>
    <property type="project" value="GO_Central"/>
</dbReference>
<dbReference type="GO" id="GO:0005886">
    <property type="term" value="C:plasma membrane"/>
    <property type="evidence" value="ECO:0000250"/>
    <property type="project" value="UniProtKB"/>
</dbReference>
<dbReference type="GO" id="GO:0001518">
    <property type="term" value="C:voltage-gated sodium channel complex"/>
    <property type="evidence" value="ECO:0000318"/>
    <property type="project" value="GO_Central"/>
</dbReference>
<dbReference type="GO" id="GO:0005248">
    <property type="term" value="F:voltage-gated sodium channel activity"/>
    <property type="evidence" value="ECO:0000250"/>
    <property type="project" value="UniProtKB"/>
</dbReference>
<dbReference type="GO" id="GO:0086006">
    <property type="term" value="F:voltage-gated sodium channel activity involved in cardiac muscle cell action potential"/>
    <property type="evidence" value="ECO:0000318"/>
    <property type="project" value="GO_Central"/>
</dbReference>
<dbReference type="GO" id="GO:0086010">
    <property type="term" value="P:membrane depolarization during action potential"/>
    <property type="evidence" value="ECO:0000250"/>
    <property type="project" value="UniProtKB"/>
</dbReference>
<dbReference type="GO" id="GO:0019228">
    <property type="term" value="P:neuronal action potential"/>
    <property type="evidence" value="ECO:0000318"/>
    <property type="project" value="GO_Central"/>
</dbReference>
<dbReference type="GO" id="GO:0060371">
    <property type="term" value="P:regulation of atrial cardiac muscle cell membrane depolarization"/>
    <property type="evidence" value="ECO:0000318"/>
    <property type="project" value="GO_Central"/>
</dbReference>
<dbReference type="GO" id="GO:0002027">
    <property type="term" value="P:regulation of heart rate"/>
    <property type="evidence" value="ECO:0000318"/>
    <property type="project" value="GO_Central"/>
</dbReference>
<dbReference type="CDD" id="cd13433">
    <property type="entry name" value="Na_channel_gate"/>
    <property type="match status" value="1"/>
</dbReference>
<dbReference type="FunFam" id="1.10.238.10:FF:000002">
    <property type="entry name" value="Sodium channel protein"/>
    <property type="match status" value="1"/>
</dbReference>
<dbReference type="FunFam" id="1.10.287.70:FF:000001">
    <property type="entry name" value="Sodium channel protein"/>
    <property type="match status" value="1"/>
</dbReference>
<dbReference type="FunFam" id="1.20.120.350:FF:000002">
    <property type="entry name" value="Sodium channel protein"/>
    <property type="match status" value="1"/>
</dbReference>
<dbReference type="FunFam" id="1.20.120.350:FF:000004">
    <property type="entry name" value="Sodium channel protein"/>
    <property type="match status" value="1"/>
</dbReference>
<dbReference type="FunFam" id="1.20.120.350:FF:000049">
    <property type="entry name" value="Sodium channel protein"/>
    <property type="match status" value="1"/>
</dbReference>
<dbReference type="FunFam" id="1.20.5.1190:FF:000007">
    <property type="entry name" value="Sodium channel protein"/>
    <property type="match status" value="1"/>
</dbReference>
<dbReference type="FunFam" id="1.20.120.350:FF:000003">
    <property type="entry name" value="Voltage-dependent sodium channel"/>
    <property type="match status" value="1"/>
</dbReference>
<dbReference type="FunFam" id="1.10.287.70:FF:000049">
    <property type="entry name" value="Voltage-dependent sodium channel 2"/>
    <property type="match status" value="1"/>
</dbReference>
<dbReference type="Gene3D" id="1.10.287.70">
    <property type="match status" value="4"/>
</dbReference>
<dbReference type="Gene3D" id="1.10.238.10">
    <property type="entry name" value="EF-hand"/>
    <property type="match status" value="1"/>
</dbReference>
<dbReference type="Gene3D" id="1.20.5.1190">
    <property type="entry name" value="iswi atpase"/>
    <property type="match status" value="1"/>
</dbReference>
<dbReference type="Gene3D" id="1.20.120.350">
    <property type="entry name" value="Voltage-gated potassium channels. Chain C"/>
    <property type="match status" value="4"/>
</dbReference>
<dbReference type="InterPro" id="IPR005821">
    <property type="entry name" value="Ion_trans_dom"/>
</dbReference>
<dbReference type="InterPro" id="IPR001696">
    <property type="entry name" value="Na_channel_asu"/>
</dbReference>
<dbReference type="InterPro" id="IPR044564">
    <property type="entry name" value="Na_chnl_inactivation_gate"/>
</dbReference>
<dbReference type="InterPro" id="IPR010526">
    <property type="entry name" value="Na_trans_assoc_dom"/>
</dbReference>
<dbReference type="InterPro" id="IPR043203">
    <property type="entry name" value="VGCC_Ca_Na"/>
</dbReference>
<dbReference type="InterPro" id="IPR027359">
    <property type="entry name" value="Volt_channel_dom_sf"/>
</dbReference>
<dbReference type="PANTHER" id="PTHR10037:SF208">
    <property type="entry name" value="SODIUM CHANNEL PROTEIN TYPE 10 SUBUNIT ALPHA"/>
    <property type="match status" value="1"/>
</dbReference>
<dbReference type="PANTHER" id="PTHR10037">
    <property type="entry name" value="VOLTAGE-GATED CATION CHANNEL CALCIUM AND SODIUM"/>
    <property type="match status" value="1"/>
</dbReference>
<dbReference type="Pfam" id="PF00520">
    <property type="entry name" value="Ion_trans"/>
    <property type="match status" value="4"/>
</dbReference>
<dbReference type="Pfam" id="PF24609">
    <property type="entry name" value="IQ_SCN5A_C"/>
    <property type="match status" value="1"/>
</dbReference>
<dbReference type="Pfam" id="PF06512">
    <property type="entry name" value="Na_trans_assoc"/>
    <property type="match status" value="1"/>
</dbReference>
<dbReference type="PRINTS" id="PR00170">
    <property type="entry name" value="NACHANNEL"/>
</dbReference>
<dbReference type="SUPFAM" id="SSF81324">
    <property type="entry name" value="Voltage-gated potassium channels"/>
    <property type="match status" value="4"/>
</dbReference>
<proteinExistence type="evidence at transcript level"/>
<keyword id="KW-1003">Cell membrane</keyword>
<keyword id="KW-1015">Disulfide bond</keyword>
<keyword id="KW-0325">Glycoprotein</keyword>
<keyword id="KW-0407">Ion channel</keyword>
<keyword id="KW-0406">Ion transport</keyword>
<keyword id="KW-0472">Membrane</keyword>
<keyword id="KW-0597">Phosphoprotein</keyword>
<keyword id="KW-1185">Reference proteome</keyword>
<keyword id="KW-0677">Repeat</keyword>
<keyword id="KW-0915">Sodium</keyword>
<keyword id="KW-0894">Sodium channel</keyword>
<keyword id="KW-0739">Sodium transport</keyword>
<keyword id="KW-0812">Transmembrane</keyword>
<keyword id="KW-1133">Transmembrane helix</keyword>
<keyword id="KW-0813">Transport</keyword>
<keyword id="KW-0832">Ubl conjugation</keyword>
<keyword id="KW-0851">Voltage-gated channel</keyword>